<dbReference type="EC" id="2.7.8.7" evidence="1"/>
<dbReference type="EMBL" id="CP000023">
    <property type="protein sequence ID" value="AAV61326.1"/>
    <property type="molecule type" value="Genomic_DNA"/>
</dbReference>
<dbReference type="RefSeq" id="WP_002951878.1">
    <property type="nucleotide sequence ID" value="NC_006448.1"/>
</dbReference>
<dbReference type="SMR" id="Q5M2S6"/>
<dbReference type="STRING" id="264199.stu1727"/>
<dbReference type="GeneID" id="66899464"/>
<dbReference type="KEGG" id="stl:stu1727"/>
<dbReference type="eggNOG" id="COG0736">
    <property type="taxonomic scope" value="Bacteria"/>
</dbReference>
<dbReference type="HOGENOM" id="CLU_089696_1_2_9"/>
<dbReference type="Proteomes" id="UP000001170">
    <property type="component" value="Chromosome"/>
</dbReference>
<dbReference type="GO" id="GO:0005737">
    <property type="term" value="C:cytoplasm"/>
    <property type="evidence" value="ECO:0007669"/>
    <property type="project" value="UniProtKB-SubCell"/>
</dbReference>
<dbReference type="GO" id="GO:0008897">
    <property type="term" value="F:holo-[acyl-carrier-protein] synthase activity"/>
    <property type="evidence" value="ECO:0007669"/>
    <property type="project" value="UniProtKB-UniRule"/>
</dbReference>
<dbReference type="GO" id="GO:0000287">
    <property type="term" value="F:magnesium ion binding"/>
    <property type="evidence" value="ECO:0007669"/>
    <property type="project" value="UniProtKB-UniRule"/>
</dbReference>
<dbReference type="GO" id="GO:0006633">
    <property type="term" value="P:fatty acid biosynthetic process"/>
    <property type="evidence" value="ECO:0007669"/>
    <property type="project" value="UniProtKB-UniRule"/>
</dbReference>
<dbReference type="Gene3D" id="3.90.470.20">
    <property type="entry name" value="4'-phosphopantetheinyl transferase domain"/>
    <property type="match status" value="1"/>
</dbReference>
<dbReference type="HAMAP" id="MF_00101">
    <property type="entry name" value="AcpS"/>
    <property type="match status" value="1"/>
</dbReference>
<dbReference type="InterPro" id="IPR008278">
    <property type="entry name" value="4-PPantetheinyl_Trfase_dom"/>
</dbReference>
<dbReference type="InterPro" id="IPR037143">
    <property type="entry name" value="4-PPantetheinyl_Trfase_dom_sf"/>
</dbReference>
<dbReference type="InterPro" id="IPR002582">
    <property type="entry name" value="ACPS"/>
</dbReference>
<dbReference type="InterPro" id="IPR004568">
    <property type="entry name" value="Ppantetheine-prot_Trfase_dom"/>
</dbReference>
<dbReference type="NCBIfam" id="TIGR00516">
    <property type="entry name" value="acpS"/>
    <property type="match status" value="1"/>
</dbReference>
<dbReference type="NCBIfam" id="TIGR00556">
    <property type="entry name" value="pantethn_trn"/>
    <property type="match status" value="1"/>
</dbReference>
<dbReference type="Pfam" id="PF01648">
    <property type="entry name" value="ACPS"/>
    <property type="match status" value="1"/>
</dbReference>
<dbReference type="SUPFAM" id="SSF56214">
    <property type="entry name" value="4'-phosphopantetheinyl transferase"/>
    <property type="match status" value="1"/>
</dbReference>
<organism>
    <name type="scientific">Streptococcus thermophilus (strain ATCC BAA-250 / LMG 18311)</name>
    <dbReference type="NCBI Taxonomy" id="264199"/>
    <lineage>
        <taxon>Bacteria</taxon>
        <taxon>Bacillati</taxon>
        <taxon>Bacillota</taxon>
        <taxon>Bacilli</taxon>
        <taxon>Lactobacillales</taxon>
        <taxon>Streptococcaceae</taxon>
        <taxon>Streptococcus</taxon>
    </lineage>
</organism>
<keyword id="KW-0963">Cytoplasm</keyword>
<keyword id="KW-0275">Fatty acid biosynthesis</keyword>
<keyword id="KW-0276">Fatty acid metabolism</keyword>
<keyword id="KW-0444">Lipid biosynthesis</keyword>
<keyword id="KW-0443">Lipid metabolism</keyword>
<keyword id="KW-0460">Magnesium</keyword>
<keyword id="KW-0479">Metal-binding</keyword>
<keyword id="KW-1185">Reference proteome</keyword>
<keyword id="KW-0808">Transferase</keyword>
<protein>
    <recommendedName>
        <fullName evidence="1">Holo-[acyl-carrier-protein] synthase</fullName>
        <shortName evidence="1">Holo-ACP synthase</shortName>
        <ecNumber evidence="1">2.7.8.7</ecNumber>
    </recommendedName>
    <alternativeName>
        <fullName evidence="1">4'-phosphopantetheinyl transferase AcpS</fullName>
    </alternativeName>
</protein>
<name>ACPS_STRT2</name>
<evidence type="ECO:0000255" key="1">
    <source>
        <dbReference type="HAMAP-Rule" id="MF_00101"/>
    </source>
</evidence>
<proteinExistence type="inferred from homology"/>
<comment type="function">
    <text evidence="1">Transfers the 4'-phosphopantetheine moiety from coenzyme A to a Ser of acyl-carrier-protein.</text>
</comment>
<comment type="catalytic activity">
    <reaction evidence="1">
        <text>apo-[ACP] + CoA = holo-[ACP] + adenosine 3',5'-bisphosphate + H(+)</text>
        <dbReference type="Rhea" id="RHEA:12068"/>
        <dbReference type="Rhea" id="RHEA-COMP:9685"/>
        <dbReference type="Rhea" id="RHEA-COMP:9690"/>
        <dbReference type="ChEBI" id="CHEBI:15378"/>
        <dbReference type="ChEBI" id="CHEBI:29999"/>
        <dbReference type="ChEBI" id="CHEBI:57287"/>
        <dbReference type="ChEBI" id="CHEBI:58343"/>
        <dbReference type="ChEBI" id="CHEBI:64479"/>
        <dbReference type="EC" id="2.7.8.7"/>
    </reaction>
</comment>
<comment type="cofactor">
    <cofactor evidence="1">
        <name>Mg(2+)</name>
        <dbReference type="ChEBI" id="CHEBI:18420"/>
    </cofactor>
</comment>
<comment type="subcellular location">
    <subcellularLocation>
        <location evidence="1">Cytoplasm</location>
    </subcellularLocation>
</comment>
<comment type="similarity">
    <text evidence="1">Belongs to the P-Pant transferase superfamily. AcpS family.</text>
</comment>
<reference key="1">
    <citation type="journal article" date="2004" name="Nat. Biotechnol.">
        <title>Complete sequence and comparative genome analysis of the dairy bacterium Streptococcus thermophilus.</title>
        <authorList>
            <person name="Bolotin A."/>
            <person name="Quinquis B."/>
            <person name="Renault P."/>
            <person name="Sorokin A."/>
            <person name="Ehrlich S.D."/>
            <person name="Kulakauskas S."/>
            <person name="Lapidus A."/>
            <person name="Goltsman E."/>
            <person name="Mazur M."/>
            <person name="Pusch G.D."/>
            <person name="Fonstein M."/>
            <person name="Overbeek R."/>
            <person name="Kyprides N."/>
            <person name="Purnelle B."/>
            <person name="Prozzi D."/>
            <person name="Ngui K."/>
            <person name="Masuy D."/>
            <person name="Hancy F."/>
            <person name="Burteau S."/>
            <person name="Boutry M."/>
            <person name="Delcour J."/>
            <person name="Goffeau A."/>
            <person name="Hols P."/>
        </authorList>
    </citation>
    <scope>NUCLEOTIDE SEQUENCE [LARGE SCALE GENOMIC DNA]</scope>
    <source>
        <strain>ATCC BAA-250 / LMG 18311</strain>
    </source>
</reference>
<feature type="chain" id="PRO_0000228312" description="Holo-[acyl-carrier-protein] synthase">
    <location>
        <begin position="1"/>
        <end position="119"/>
    </location>
</feature>
<feature type="binding site" evidence="1">
    <location>
        <position position="8"/>
    </location>
    <ligand>
        <name>Mg(2+)</name>
        <dbReference type="ChEBI" id="CHEBI:18420"/>
    </ligand>
</feature>
<feature type="binding site" evidence="1">
    <location>
        <position position="58"/>
    </location>
    <ligand>
        <name>Mg(2+)</name>
        <dbReference type="ChEBI" id="CHEBI:18420"/>
    </ligand>
</feature>
<sequence length="119" mass="13204">MIFGHGIDLQEISAVKKAYDRNPRFAKKVLTPKEWERFESLSGERQMSFLAGRWAGKEAFSKAWGTGIGAVGFKDIEILNNDKGAPVVTQSPFEGNVFISISHSGDFVQASVILEKTKR</sequence>
<accession>Q5M2S6</accession>
<gene>
    <name evidence="1" type="primary">acpS</name>
    <name type="ordered locus">stu1727</name>
</gene>